<gene>
    <name evidence="1" type="primary">luxS</name>
    <name type="ordered locus">BA_5047</name>
    <name type="ordered locus">GBAA_5047</name>
    <name type="ordered locus">BAS4687</name>
</gene>
<name>LUXS_BACAN</name>
<accession>Q81KF3</accession>
<accession>Q6HRV7</accession>
<accession>Q6KL63</accession>
<comment type="function">
    <text evidence="1">Involved in the synthesis of autoinducer 2 (AI-2) which is secreted by bacteria and is used to communicate both the cell density and the metabolic potential of the environment. The regulation of gene expression in response to changes in cell density is called quorum sensing. Catalyzes the transformation of S-ribosylhomocysteine (RHC) to homocysteine (HC) and 4,5-dihydroxy-2,3-pentadione (DPD).</text>
</comment>
<comment type="catalytic activity">
    <reaction evidence="1">
        <text>S-(5-deoxy-D-ribos-5-yl)-L-homocysteine = (S)-4,5-dihydroxypentane-2,3-dione + L-homocysteine</text>
        <dbReference type="Rhea" id="RHEA:17753"/>
        <dbReference type="ChEBI" id="CHEBI:29484"/>
        <dbReference type="ChEBI" id="CHEBI:58195"/>
        <dbReference type="ChEBI" id="CHEBI:58199"/>
        <dbReference type="EC" id="4.4.1.21"/>
    </reaction>
</comment>
<comment type="cofactor">
    <cofactor evidence="1">
        <name>Fe cation</name>
        <dbReference type="ChEBI" id="CHEBI:24875"/>
    </cofactor>
    <text evidence="1">Binds 1 Fe cation per subunit.</text>
</comment>
<comment type="subunit">
    <text evidence="1">Homodimer.</text>
</comment>
<comment type="similarity">
    <text evidence="1">Belongs to the LuxS family.</text>
</comment>
<proteinExistence type="inferred from homology"/>
<protein>
    <recommendedName>
        <fullName evidence="1">S-ribosylhomocysteine lyase</fullName>
        <ecNumber evidence="1">4.4.1.21</ecNumber>
    </recommendedName>
    <alternativeName>
        <fullName evidence="1">AI-2 synthesis protein</fullName>
    </alternativeName>
    <alternativeName>
        <fullName evidence="1">Autoinducer-2 production protein LuxS</fullName>
    </alternativeName>
</protein>
<reference key="1">
    <citation type="journal article" date="2003" name="Nature">
        <title>The genome sequence of Bacillus anthracis Ames and comparison to closely related bacteria.</title>
        <authorList>
            <person name="Read T.D."/>
            <person name="Peterson S.N."/>
            <person name="Tourasse N.J."/>
            <person name="Baillie L.W."/>
            <person name="Paulsen I.T."/>
            <person name="Nelson K.E."/>
            <person name="Tettelin H."/>
            <person name="Fouts D.E."/>
            <person name="Eisen J.A."/>
            <person name="Gill S.R."/>
            <person name="Holtzapple E.K."/>
            <person name="Okstad O.A."/>
            <person name="Helgason E."/>
            <person name="Rilstone J."/>
            <person name="Wu M."/>
            <person name="Kolonay J.F."/>
            <person name="Beanan M.J."/>
            <person name="Dodson R.J."/>
            <person name="Brinkac L.M."/>
            <person name="Gwinn M.L."/>
            <person name="DeBoy R.T."/>
            <person name="Madpu R."/>
            <person name="Daugherty S.C."/>
            <person name="Durkin A.S."/>
            <person name="Haft D.H."/>
            <person name="Nelson W.C."/>
            <person name="Peterson J.D."/>
            <person name="Pop M."/>
            <person name="Khouri H.M."/>
            <person name="Radune D."/>
            <person name="Benton J.L."/>
            <person name="Mahamoud Y."/>
            <person name="Jiang L."/>
            <person name="Hance I.R."/>
            <person name="Weidman J.F."/>
            <person name="Berry K.J."/>
            <person name="Plaut R.D."/>
            <person name="Wolf A.M."/>
            <person name="Watkins K.L."/>
            <person name="Nierman W.C."/>
            <person name="Hazen A."/>
            <person name="Cline R.T."/>
            <person name="Redmond C."/>
            <person name="Thwaite J.E."/>
            <person name="White O."/>
            <person name="Salzberg S.L."/>
            <person name="Thomason B."/>
            <person name="Friedlander A.M."/>
            <person name="Koehler T.M."/>
            <person name="Hanna P.C."/>
            <person name="Kolstoe A.-B."/>
            <person name="Fraser C.M."/>
        </authorList>
    </citation>
    <scope>NUCLEOTIDE SEQUENCE [LARGE SCALE GENOMIC DNA]</scope>
    <source>
        <strain>Ames / isolate Porton</strain>
    </source>
</reference>
<reference key="2">
    <citation type="journal article" date="2009" name="J. Bacteriol.">
        <title>The complete genome sequence of Bacillus anthracis Ames 'Ancestor'.</title>
        <authorList>
            <person name="Ravel J."/>
            <person name="Jiang L."/>
            <person name="Stanley S.T."/>
            <person name="Wilson M.R."/>
            <person name="Decker R.S."/>
            <person name="Read T.D."/>
            <person name="Worsham P."/>
            <person name="Keim P.S."/>
            <person name="Salzberg S.L."/>
            <person name="Fraser-Liggett C.M."/>
            <person name="Rasko D.A."/>
        </authorList>
    </citation>
    <scope>NUCLEOTIDE SEQUENCE [LARGE SCALE GENOMIC DNA]</scope>
    <source>
        <strain>Ames ancestor</strain>
    </source>
</reference>
<reference key="3">
    <citation type="submission" date="2004-01" db="EMBL/GenBank/DDBJ databases">
        <title>Complete genome sequence of Bacillus anthracis Sterne.</title>
        <authorList>
            <person name="Brettin T.S."/>
            <person name="Bruce D."/>
            <person name="Challacombe J.F."/>
            <person name="Gilna P."/>
            <person name="Han C."/>
            <person name="Hill K."/>
            <person name="Hitchcock P."/>
            <person name="Jackson P."/>
            <person name="Keim P."/>
            <person name="Longmire J."/>
            <person name="Lucas S."/>
            <person name="Okinaka R."/>
            <person name="Richardson P."/>
            <person name="Rubin E."/>
            <person name="Tice H."/>
        </authorList>
    </citation>
    <scope>NUCLEOTIDE SEQUENCE [LARGE SCALE GENOMIC DNA]</scope>
    <source>
        <strain>Sterne</strain>
    </source>
</reference>
<organism>
    <name type="scientific">Bacillus anthracis</name>
    <dbReference type="NCBI Taxonomy" id="1392"/>
    <lineage>
        <taxon>Bacteria</taxon>
        <taxon>Bacillati</taxon>
        <taxon>Bacillota</taxon>
        <taxon>Bacilli</taxon>
        <taxon>Bacillales</taxon>
        <taxon>Bacillaceae</taxon>
        <taxon>Bacillus</taxon>
        <taxon>Bacillus cereus group</taxon>
    </lineage>
</organism>
<sequence>MPSVESFELDHTIVKAPYVRHCGVHNVGSDGIVNKFDIRFCQPNKQAMKPDVIHTLEHLLAFNLRKYIDRYPHFDIIDISPMGCQTGYYLVVSGTPTVREIIDLLELTLKDAVQITEIPAANETQCGQAKLHDLEGAKRLMNFWLSQDKDELEKVFG</sequence>
<keyword id="KW-0071">Autoinducer synthesis</keyword>
<keyword id="KW-0408">Iron</keyword>
<keyword id="KW-0456">Lyase</keyword>
<keyword id="KW-0479">Metal-binding</keyword>
<keyword id="KW-0673">Quorum sensing</keyword>
<keyword id="KW-1185">Reference proteome</keyword>
<evidence type="ECO:0000255" key="1">
    <source>
        <dbReference type="HAMAP-Rule" id="MF_00091"/>
    </source>
</evidence>
<feature type="chain" id="PRO_0000172204" description="S-ribosylhomocysteine lyase">
    <location>
        <begin position="1"/>
        <end position="157"/>
    </location>
</feature>
<feature type="binding site" evidence="1">
    <location>
        <position position="54"/>
    </location>
    <ligand>
        <name>Fe cation</name>
        <dbReference type="ChEBI" id="CHEBI:24875"/>
    </ligand>
</feature>
<feature type="binding site" evidence="1">
    <location>
        <position position="58"/>
    </location>
    <ligand>
        <name>Fe cation</name>
        <dbReference type="ChEBI" id="CHEBI:24875"/>
    </ligand>
</feature>
<feature type="binding site" evidence="1">
    <location>
        <position position="126"/>
    </location>
    <ligand>
        <name>Fe cation</name>
        <dbReference type="ChEBI" id="CHEBI:24875"/>
    </ligand>
</feature>
<dbReference type="EC" id="4.4.1.21" evidence="1"/>
<dbReference type="EMBL" id="AE016879">
    <property type="protein sequence ID" value="AAP28724.1"/>
    <property type="molecule type" value="Genomic_DNA"/>
</dbReference>
<dbReference type="EMBL" id="AE017334">
    <property type="protein sequence ID" value="AAT34170.1"/>
    <property type="molecule type" value="Genomic_DNA"/>
</dbReference>
<dbReference type="EMBL" id="AE017225">
    <property type="protein sequence ID" value="AAT56981.1"/>
    <property type="molecule type" value="Genomic_DNA"/>
</dbReference>
<dbReference type="RefSeq" id="NP_847238.1">
    <property type="nucleotide sequence ID" value="NC_003997.3"/>
</dbReference>
<dbReference type="RefSeq" id="WP_001141369.1">
    <property type="nucleotide sequence ID" value="NZ_WXXJ01000026.1"/>
</dbReference>
<dbReference type="RefSeq" id="YP_030931.1">
    <property type="nucleotide sequence ID" value="NC_005945.1"/>
</dbReference>
<dbReference type="SMR" id="Q81KF3"/>
<dbReference type="STRING" id="261594.GBAA_5047"/>
<dbReference type="DNASU" id="1084317"/>
<dbReference type="GeneID" id="93006297"/>
<dbReference type="KEGG" id="ban:BA_5047"/>
<dbReference type="KEGG" id="bar:GBAA_5047"/>
<dbReference type="KEGG" id="bat:BAS4687"/>
<dbReference type="PATRIC" id="fig|198094.11.peg.5008"/>
<dbReference type="eggNOG" id="COG1854">
    <property type="taxonomic scope" value="Bacteria"/>
</dbReference>
<dbReference type="HOGENOM" id="CLU_107531_2_0_9"/>
<dbReference type="OMA" id="DVSPMGC"/>
<dbReference type="OrthoDB" id="9788129at2"/>
<dbReference type="BRENDA" id="4.4.1.21">
    <property type="organism ID" value="634"/>
</dbReference>
<dbReference type="Proteomes" id="UP000000427">
    <property type="component" value="Chromosome"/>
</dbReference>
<dbReference type="Proteomes" id="UP000000594">
    <property type="component" value="Chromosome"/>
</dbReference>
<dbReference type="GO" id="GO:0005506">
    <property type="term" value="F:iron ion binding"/>
    <property type="evidence" value="ECO:0007669"/>
    <property type="project" value="InterPro"/>
</dbReference>
<dbReference type="GO" id="GO:0043768">
    <property type="term" value="F:S-ribosylhomocysteine lyase activity"/>
    <property type="evidence" value="ECO:0007669"/>
    <property type="project" value="UniProtKB-UniRule"/>
</dbReference>
<dbReference type="GO" id="GO:0009372">
    <property type="term" value="P:quorum sensing"/>
    <property type="evidence" value="ECO:0007669"/>
    <property type="project" value="UniProtKB-UniRule"/>
</dbReference>
<dbReference type="Gene3D" id="3.30.1360.80">
    <property type="entry name" value="S-ribosylhomocysteinase (LuxS)"/>
    <property type="match status" value="1"/>
</dbReference>
<dbReference type="HAMAP" id="MF_00091">
    <property type="entry name" value="LuxS"/>
    <property type="match status" value="1"/>
</dbReference>
<dbReference type="InterPro" id="IPR037005">
    <property type="entry name" value="LuxS_sf"/>
</dbReference>
<dbReference type="InterPro" id="IPR011249">
    <property type="entry name" value="Metalloenz_LuxS/M16"/>
</dbReference>
<dbReference type="InterPro" id="IPR003815">
    <property type="entry name" value="S-ribosylhomocysteinase"/>
</dbReference>
<dbReference type="NCBIfam" id="NF002603">
    <property type="entry name" value="PRK02260.1-3"/>
    <property type="match status" value="1"/>
</dbReference>
<dbReference type="PANTHER" id="PTHR35799">
    <property type="entry name" value="S-RIBOSYLHOMOCYSTEINE LYASE"/>
    <property type="match status" value="1"/>
</dbReference>
<dbReference type="PANTHER" id="PTHR35799:SF1">
    <property type="entry name" value="S-RIBOSYLHOMOCYSTEINE LYASE"/>
    <property type="match status" value="1"/>
</dbReference>
<dbReference type="Pfam" id="PF02664">
    <property type="entry name" value="LuxS"/>
    <property type="match status" value="1"/>
</dbReference>
<dbReference type="PIRSF" id="PIRSF006160">
    <property type="entry name" value="AI2"/>
    <property type="match status" value="1"/>
</dbReference>
<dbReference type="PRINTS" id="PR01487">
    <property type="entry name" value="LUXSPROTEIN"/>
</dbReference>
<dbReference type="SUPFAM" id="SSF63411">
    <property type="entry name" value="LuxS/MPP-like metallohydrolase"/>
    <property type="match status" value="1"/>
</dbReference>